<organism>
    <name type="scientific">Caldanaerobacter subterraneus subsp. tengcongensis (strain DSM 15242 / JCM 11007 / NBRC 100824 / MB4)</name>
    <name type="common">Thermoanaerobacter tengcongensis</name>
    <dbReference type="NCBI Taxonomy" id="273068"/>
    <lineage>
        <taxon>Bacteria</taxon>
        <taxon>Bacillati</taxon>
        <taxon>Bacillota</taxon>
        <taxon>Clostridia</taxon>
        <taxon>Thermoanaerobacterales</taxon>
        <taxon>Thermoanaerobacteraceae</taxon>
        <taxon>Caldanaerobacter</taxon>
    </lineage>
</organism>
<comment type="function">
    <text evidence="1">DNA-dependent RNA polymerase catalyzes the transcription of DNA into RNA using the four ribonucleoside triphosphates as substrates.</text>
</comment>
<comment type="catalytic activity">
    <reaction evidence="1">
        <text>RNA(n) + a ribonucleoside 5'-triphosphate = RNA(n+1) + diphosphate</text>
        <dbReference type="Rhea" id="RHEA:21248"/>
        <dbReference type="Rhea" id="RHEA-COMP:14527"/>
        <dbReference type="Rhea" id="RHEA-COMP:17342"/>
        <dbReference type="ChEBI" id="CHEBI:33019"/>
        <dbReference type="ChEBI" id="CHEBI:61557"/>
        <dbReference type="ChEBI" id="CHEBI:140395"/>
        <dbReference type="EC" id="2.7.7.6"/>
    </reaction>
</comment>
<comment type="cofactor">
    <cofactor evidence="1">
        <name>Mg(2+)</name>
        <dbReference type="ChEBI" id="CHEBI:18420"/>
    </cofactor>
    <text evidence="1">Binds 1 Mg(2+) ion per subunit.</text>
</comment>
<comment type="cofactor">
    <cofactor evidence="1">
        <name>Zn(2+)</name>
        <dbReference type="ChEBI" id="CHEBI:29105"/>
    </cofactor>
    <text evidence="1">Binds 2 Zn(2+) ions per subunit.</text>
</comment>
<comment type="subunit">
    <text evidence="1">The RNAP catalytic core consists of 2 alpha, 1 beta, 1 beta' and 1 omega subunit. When a sigma factor is associated with the core the holoenzyme is formed, which can initiate transcription.</text>
</comment>
<comment type="similarity">
    <text evidence="1">Belongs to the RNA polymerase beta' chain family.</text>
</comment>
<name>RPOC_CALS4</name>
<evidence type="ECO:0000255" key="1">
    <source>
        <dbReference type="HAMAP-Rule" id="MF_01322"/>
    </source>
</evidence>
<gene>
    <name evidence="1" type="primary">rpoC</name>
    <name type="ordered locus">TTE2300</name>
</gene>
<dbReference type="EC" id="2.7.7.6" evidence="1"/>
<dbReference type="EMBL" id="AE008691">
    <property type="protein sequence ID" value="AAM25442.1"/>
    <property type="molecule type" value="Genomic_DNA"/>
</dbReference>
<dbReference type="RefSeq" id="WP_011026345.1">
    <property type="nucleotide sequence ID" value="NC_003869.1"/>
</dbReference>
<dbReference type="SMR" id="Q8R7U7"/>
<dbReference type="STRING" id="273068.TTE2300"/>
<dbReference type="KEGG" id="tte:TTE2300"/>
<dbReference type="eggNOG" id="COG0086">
    <property type="taxonomic scope" value="Bacteria"/>
</dbReference>
<dbReference type="HOGENOM" id="CLU_000524_3_1_9"/>
<dbReference type="OrthoDB" id="9815296at2"/>
<dbReference type="Proteomes" id="UP000000555">
    <property type="component" value="Chromosome"/>
</dbReference>
<dbReference type="GO" id="GO:0000428">
    <property type="term" value="C:DNA-directed RNA polymerase complex"/>
    <property type="evidence" value="ECO:0007669"/>
    <property type="project" value="UniProtKB-KW"/>
</dbReference>
<dbReference type="GO" id="GO:0003677">
    <property type="term" value="F:DNA binding"/>
    <property type="evidence" value="ECO:0007669"/>
    <property type="project" value="UniProtKB-UniRule"/>
</dbReference>
<dbReference type="GO" id="GO:0003899">
    <property type="term" value="F:DNA-directed RNA polymerase activity"/>
    <property type="evidence" value="ECO:0007669"/>
    <property type="project" value="UniProtKB-UniRule"/>
</dbReference>
<dbReference type="GO" id="GO:0000287">
    <property type="term" value="F:magnesium ion binding"/>
    <property type="evidence" value="ECO:0007669"/>
    <property type="project" value="UniProtKB-UniRule"/>
</dbReference>
<dbReference type="GO" id="GO:0008270">
    <property type="term" value="F:zinc ion binding"/>
    <property type="evidence" value="ECO:0007669"/>
    <property type="project" value="UniProtKB-UniRule"/>
</dbReference>
<dbReference type="GO" id="GO:0006351">
    <property type="term" value="P:DNA-templated transcription"/>
    <property type="evidence" value="ECO:0007669"/>
    <property type="project" value="UniProtKB-UniRule"/>
</dbReference>
<dbReference type="CDD" id="cd02655">
    <property type="entry name" value="RNAP_beta'_C"/>
    <property type="match status" value="1"/>
</dbReference>
<dbReference type="CDD" id="cd01609">
    <property type="entry name" value="RNAP_beta'_N"/>
    <property type="match status" value="1"/>
</dbReference>
<dbReference type="FunFam" id="1.10.150.390:FF:000002">
    <property type="entry name" value="DNA-directed RNA polymerase subunit beta"/>
    <property type="match status" value="1"/>
</dbReference>
<dbReference type="FunFam" id="1.10.40.90:FF:000001">
    <property type="entry name" value="DNA-directed RNA polymerase subunit beta"/>
    <property type="match status" value="1"/>
</dbReference>
<dbReference type="FunFam" id="4.10.860.120:FF:000001">
    <property type="entry name" value="DNA-directed RNA polymerase subunit beta"/>
    <property type="match status" value="1"/>
</dbReference>
<dbReference type="Gene3D" id="1.10.132.30">
    <property type="match status" value="1"/>
</dbReference>
<dbReference type="Gene3D" id="1.10.150.390">
    <property type="match status" value="1"/>
</dbReference>
<dbReference type="Gene3D" id="1.10.1790.20">
    <property type="match status" value="1"/>
</dbReference>
<dbReference type="Gene3D" id="1.10.40.90">
    <property type="match status" value="1"/>
</dbReference>
<dbReference type="Gene3D" id="2.40.40.20">
    <property type="match status" value="1"/>
</dbReference>
<dbReference type="Gene3D" id="2.40.50.100">
    <property type="match status" value="1"/>
</dbReference>
<dbReference type="Gene3D" id="4.10.860.120">
    <property type="entry name" value="RNA polymerase II, clamp domain"/>
    <property type="match status" value="1"/>
</dbReference>
<dbReference type="Gene3D" id="1.10.274.100">
    <property type="entry name" value="RNA polymerase Rpb1, domain 3"/>
    <property type="match status" value="1"/>
</dbReference>
<dbReference type="HAMAP" id="MF_01322">
    <property type="entry name" value="RNApol_bact_RpoC"/>
    <property type="match status" value="1"/>
</dbReference>
<dbReference type="InterPro" id="IPR012756">
    <property type="entry name" value="DNA-dir_RpoC2_beta_pp"/>
</dbReference>
<dbReference type="InterPro" id="IPR045867">
    <property type="entry name" value="DNA-dir_RpoC_beta_prime"/>
</dbReference>
<dbReference type="InterPro" id="IPR012754">
    <property type="entry name" value="DNA-dir_RpoC_beta_prime_bact"/>
</dbReference>
<dbReference type="InterPro" id="IPR000722">
    <property type="entry name" value="RNA_pol_asu"/>
</dbReference>
<dbReference type="InterPro" id="IPR006592">
    <property type="entry name" value="RNA_pol_N"/>
</dbReference>
<dbReference type="InterPro" id="IPR007080">
    <property type="entry name" value="RNA_pol_Rpb1_1"/>
</dbReference>
<dbReference type="InterPro" id="IPR007066">
    <property type="entry name" value="RNA_pol_Rpb1_3"/>
</dbReference>
<dbReference type="InterPro" id="IPR042102">
    <property type="entry name" value="RNA_pol_Rpb1_3_sf"/>
</dbReference>
<dbReference type="InterPro" id="IPR007083">
    <property type="entry name" value="RNA_pol_Rpb1_4"/>
</dbReference>
<dbReference type="InterPro" id="IPR007081">
    <property type="entry name" value="RNA_pol_Rpb1_5"/>
</dbReference>
<dbReference type="InterPro" id="IPR044893">
    <property type="entry name" value="RNA_pol_Rpb1_clamp_domain"/>
</dbReference>
<dbReference type="InterPro" id="IPR038120">
    <property type="entry name" value="Rpb1_funnel_sf"/>
</dbReference>
<dbReference type="NCBIfam" id="NF011498">
    <property type="entry name" value="PRK14906.1"/>
    <property type="match status" value="1"/>
</dbReference>
<dbReference type="NCBIfam" id="TIGR02388">
    <property type="entry name" value="rpoC2_cyan"/>
    <property type="match status" value="1"/>
</dbReference>
<dbReference type="NCBIfam" id="TIGR02386">
    <property type="entry name" value="rpoC_TIGR"/>
    <property type="match status" value="1"/>
</dbReference>
<dbReference type="PANTHER" id="PTHR19376">
    <property type="entry name" value="DNA-DIRECTED RNA POLYMERASE"/>
    <property type="match status" value="1"/>
</dbReference>
<dbReference type="PANTHER" id="PTHR19376:SF54">
    <property type="entry name" value="DNA-DIRECTED RNA POLYMERASE SUBUNIT BETA"/>
    <property type="match status" value="1"/>
</dbReference>
<dbReference type="Pfam" id="PF04997">
    <property type="entry name" value="RNA_pol_Rpb1_1"/>
    <property type="match status" value="1"/>
</dbReference>
<dbReference type="Pfam" id="PF00623">
    <property type="entry name" value="RNA_pol_Rpb1_2"/>
    <property type="match status" value="1"/>
</dbReference>
<dbReference type="Pfam" id="PF04983">
    <property type="entry name" value="RNA_pol_Rpb1_3"/>
    <property type="match status" value="1"/>
</dbReference>
<dbReference type="Pfam" id="PF05000">
    <property type="entry name" value="RNA_pol_Rpb1_4"/>
    <property type="match status" value="1"/>
</dbReference>
<dbReference type="Pfam" id="PF04998">
    <property type="entry name" value="RNA_pol_Rpb1_5"/>
    <property type="match status" value="1"/>
</dbReference>
<dbReference type="SMART" id="SM00663">
    <property type="entry name" value="RPOLA_N"/>
    <property type="match status" value="1"/>
</dbReference>
<dbReference type="SUPFAM" id="SSF64484">
    <property type="entry name" value="beta and beta-prime subunits of DNA dependent RNA-polymerase"/>
    <property type="match status" value="1"/>
</dbReference>
<keyword id="KW-0240">DNA-directed RNA polymerase</keyword>
<keyword id="KW-0460">Magnesium</keyword>
<keyword id="KW-0479">Metal-binding</keyword>
<keyword id="KW-0548">Nucleotidyltransferase</keyword>
<keyword id="KW-1185">Reference proteome</keyword>
<keyword id="KW-0804">Transcription</keyword>
<keyword id="KW-0808">Transferase</keyword>
<keyword id="KW-0862">Zinc</keyword>
<feature type="chain" id="PRO_0000067821" description="DNA-directed RNA polymerase subunit beta'">
    <location>
        <begin position="1"/>
        <end position="1183"/>
    </location>
</feature>
<feature type="binding site" evidence="1">
    <location>
        <position position="60"/>
    </location>
    <ligand>
        <name>Zn(2+)</name>
        <dbReference type="ChEBI" id="CHEBI:29105"/>
        <label>1</label>
    </ligand>
</feature>
<feature type="binding site" evidence="1">
    <location>
        <position position="62"/>
    </location>
    <ligand>
        <name>Zn(2+)</name>
        <dbReference type="ChEBI" id="CHEBI:29105"/>
        <label>1</label>
    </ligand>
</feature>
<feature type="binding site" evidence="1">
    <location>
        <position position="75"/>
    </location>
    <ligand>
        <name>Zn(2+)</name>
        <dbReference type="ChEBI" id="CHEBI:29105"/>
        <label>1</label>
    </ligand>
</feature>
<feature type="binding site" evidence="1">
    <location>
        <position position="78"/>
    </location>
    <ligand>
        <name>Zn(2+)</name>
        <dbReference type="ChEBI" id="CHEBI:29105"/>
        <label>1</label>
    </ligand>
</feature>
<feature type="binding site" evidence="1">
    <location>
        <position position="449"/>
    </location>
    <ligand>
        <name>Mg(2+)</name>
        <dbReference type="ChEBI" id="CHEBI:18420"/>
    </ligand>
</feature>
<feature type="binding site" evidence="1">
    <location>
        <position position="451"/>
    </location>
    <ligand>
        <name>Mg(2+)</name>
        <dbReference type="ChEBI" id="CHEBI:18420"/>
    </ligand>
</feature>
<feature type="binding site" evidence="1">
    <location>
        <position position="453"/>
    </location>
    <ligand>
        <name>Mg(2+)</name>
        <dbReference type="ChEBI" id="CHEBI:18420"/>
    </ligand>
</feature>
<feature type="binding site" evidence="1">
    <location>
        <position position="794"/>
    </location>
    <ligand>
        <name>Zn(2+)</name>
        <dbReference type="ChEBI" id="CHEBI:29105"/>
        <label>2</label>
    </ligand>
</feature>
<feature type="binding site" evidence="1">
    <location>
        <position position="867"/>
    </location>
    <ligand>
        <name>Zn(2+)</name>
        <dbReference type="ChEBI" id="CHEBI:29105"/>
        <label>2</label>
    </ligand>
</feature>
<feature type="binding site" evidence="1">
    <location>
        <position position="874"/>
    </location>
    <ligand>
        <name>Zn(2+)</name>
        <dbReference type="ChEBI" id="CHEBI:29105"/>
        <label>2</label>
    </ligand>
</feature>
<feature type="binding site" evidence="1">
    <location>
        <position position="877"/>
    </location>
    <ligand>
        <name>Zn(2+)</name>
        <dbReference type="ChEBI" id="CHEBI:29105"/>
        <label>2</label>
    </ligand>
</feature>
<proteinExistence type="inferred from homology"/>
<reference key="1">
    <citation type="journal article" date="2002" name="Genome Res.">
        <title>A complete sequence of the T. tengcongensis genome.</title>
        <authorList>
            <person name="Bao Q."/>
            <person name="Tian Y."/>
            <person name="Li W."/>
            <person name="Xu Z."/>
            <person name="Xuan Z."/>
            <person name="Hu S."/>
            <person name="Dong W."/>
            <person name="Yang J."/>
            <person name="Chen Y."/>
            <person name="Xue Y."/>
            <person name="Xu Y."/>
            <person name="Lai X."/>
            <person name="Huang L."/>
            <person name="Dong X."/>
            <person name="Ma Y."/>
            <person name="Ling L."/>
            <person name="Tan H."/>
            <person name="Chen R."/>
            <person name="Wang J."/>
            <person name="Yu J."/>
            <person name="Yang H."/>
        </authorList>
    </citation>
    <scope>NUCLEOTIDE SEQUENCE [LARGE SCALE GENOMIC DNA]</scope>
    <source>
        <strain>DSM 15242 / JCM 11007 / NBRC 100824 / MB4</strain>
    </source>
</reference>
<protein>
    <recommendedName>
        <fullName evidence="1">DNA-directed RNA polymerase subunit beta'</fullName>
        <shortName evidence="1">RNAP subunit beta'</shortName>
        <ecNumber evidence="1">2.7.7.6</ecNumber>
    </recommendedName>
    <alternativeName>
        <fullName evidence="1">RNA polymerase subunit beta'</fullName>
    </alternativeName>
    <alternativeName>
        <fullName evidence="1">Transcriptase subunit beta'</fullName>
    </alternativeName>
</protein>
<accession>Q8R7U7</accession>
<sequence length="1183" mass="133280">MFKLKNFEAIKIGLASPEKIREWSRGEVKKPETINYRTLKPERDGLFCERIFGPTKDWECHCGKYKRVKYKGVVCDRCGVEVTRSKVRRERMGHIELAAPVAHIWYVKGIPSRMGLLLDMSPRALEKVLYFVSYVVIDPGDTPLTKKQLLSEKEYREYLEKYGNRFRAGMGAEAIKELLQEIDLEKLSKELRAEIKESTGQKRVRAIRRLEVVQAFIDSGNRPEWMILEVLPVIPPDLRPMVQLDGGRFATSDLNDLYRRVINRNNRLKKLLDLGAPDIIVRNEKRMLQEAVDALIDNGRRGRPVTGPGNRPLKSLSDMLKGKQGRFRQNLLGKRVDYSGRSVIVVGPELKVYQCGLPKEMALELFKPFVMKRLVDKGLAQHIKSAKRMVERVRPEVWDVLEEVIKEHPVLLNRAPTLHRLGIQAFEPVLVEGRAIKLHPLVCPAYNADFDGDQMAVHIPLSMEAQAEARFLMLAANNILKPQDGKPVMTPTQDMVLGCYYLTADEDGVPGEGKYFSSPEEALMAYQLGYIHIHAKIKVKMTREINGEKKSKVIETTVGKIIFNEAIPQDLGFVDRNNPETAFNLEINDLVDKSKLGKILDRVYRIHGPTKTAETLDKIKELGFKYSTKAAITISVSDMVIPKEKEKLLKEADEMVAKIEAQFRRGLISEEERYEKVIETWNMTTEKVTEALMATLDKFNPIFMMAHSGARGSKNQIRQLAGMRGLMADPSGRIIELPIRSNFREGLNVLEFFISTHGARKGLADTALRTADSGYLTRRLVDVSQDVIVREEDCGTDEGIYVEEIREGNEIIEKLSDRIIGRIAAEDIVDSEGNVIVRRNEMINEEEAEKIDKAGITRVKIRSPLTCRSRHGVCRMCYGRDLATGELVNIGEAVGIIAAQAIGEPGTQLTMRTFHTGGVAGVDITQGLPRVEELFEARKPKGLAVITEISGVVRINESKKRREITVVDEENNISKTYLIPYGSRLKVRDGQWVQAGDELTEGSVNPHDLLKIKGIYAVQSYLLQEVQKVYRLQGVEINDKHIEIIIRQMMKKVKVEDPGDTSMLPGELIDMFKFEEENKKAIEKGLRPATGRRALLGITKAALATDSFLSAASFQETTRVLTDAAIKGKVDPLIGLKENVIIGKLIPAGTGLSRYRNITVVKKEDQEKKEEVKKEAVDAKASS</sequence>